<dbReference type="EMBL" id="CP001022">
    <property type="protein sequence ID" value="ACB59614.1"/>
    <property type="molecule type" value="Genomic_DNA"/>
</dbReference>
<dbReference type="RefSeq" id="WP_012369039.1">
    <property type="nucleotide sequence ID" value="NC_010556.1"/>
</dbReference>
<dbReference type="SMR" id="B1YH82"/>
<dbReference type="STRING" id="262543.Exig_0127"/>
<dbReference type="KEGG" id="esi:Exig_0127"/>
<dbReference type="eggNOG" id="COG0619">
    <property type="taxonomic scope" value="Bacteria"/>
</dbReference>
<dbReference type="HOGENOM" id="CLU_056469_2_2_9"/>
<dbReference type="OrthoDB" id="8075495at2"/>
<dbReference type="Proteomes" id="UP000001681">
    <property type="component" value="Chromosome"/>
</dbReference>
<dbReference type="GO" id="GO:0005886">
    <property type="term" value="C:plasma membrane"/>
    <property type="evidence" value="ECO:0007669"/>
    <property type="project" value="UniProtKB-SubCell"/>
</dbReference>
<dbReference type="GO" id="GO:0022857">
    <property type="term" value="F:transmembrane transporter activity"/>
    <property type="evidence" value="ECO:0007669"/>
    <property type="project" value="UniProtKB-UniRule"/>
</dbReference>
<dbReference type="CDD" id="cd16914">
    <property type="entry name" value="EcfT"/>
    <property type="match status" value="1"/>
</dbReference>
<dbReference type="HAMAP" id="MF_01461">
    <property type="entry name" value="EcfT"/>
    <property type="match status" value="1"/>
</dbReference>
<dbReference type="InterPro" id="IPR003339">
    <property type="entry name" value="ABC/ECF_trnsptr_transmembrane"/>
</dbReference>
<dbReference type="InterPro" id="IPR024919">
    <property type="entry name" value="EcfT"/>
</dbReference>
<dbReference type="PANTHER" id="PTHR33514">
    <property type="entry name" value="PROTEIN ABCI12, CHLOROPLASTIC"/>
    <property type="match status" value="1"/>
</dbReference>
<dbReference type="PANTHER" id="PTHR33514:SF13">
    <property type="entry name" value="PROTEIN ABCI12, CHLOROPLASTIC"/>
    <property type="match status" value="1"/>
</dbReference>
<dbReference type="Pfam" id="PF02361">
    <property type="entry name" value="CbiQ"/>
    <property type="match status" value="1"/>
</dbReference>
<proteinExistence type="inferred from homology"/>
<evidence type="ECO:0000255" key="1">
    <source>
        <dbReference type="HAMAP-Rule" id="MF_01461"/>
    </source>
</evidence>
<feature type="chain" id="PRO_0000408988" description="Energy-coupling factor transporter transmembrane protein EcfT">
    <location>
        <begin position="1"/>
        <end position="263"/>
    </location>
</feature>
<feature type="transmembrane region" description="Helical" evidence="1">
    <location>
        <begin position="22"/>
        <end position="42"/>
    </location>
</feature>
<feature type="transmembrane region" description="Helical" evidence="1">
    <location>
        <begin position="69"/>
        <end position="89"/>
    </location>
</feature>
<feature type="transmembrane region" description="Helical" evidence="1">
    <location>
        <begin position="105"/>
        <end position="125"/>
    </location>
</feature>
<feature type="transmembrane region" description="Helical" evidence="1">
    <location>
        <begin position="243"/>
        <end position="263"/>
    </location>
</feature>
<gene>
    <name evidence="1" type="primary">ecfT</name>
    <name type="ordered locus">Exig_0127</name>
</gene>
<reference key="1">
    <citation type="submission" date="2008-04" db="EMBL/GenBank/DDBJ databases">
        <title>Complete sequence of chromosome of Exiguobacterium sibiricum 255-15.</title>
        <authorList>
            <consortium name="US DOE Joint Genome Institute"/>
            <person name="Copeland A."/>
            <person name="Lucas S."/>
            <person name="Lapidus A."/>
            <person name="Glavina del Rio T."/>
            <person name="Dalin E."/>
            <person name="Tice H."/>
            <person name="Bruce D."/>
            <person name="Goodwin L."/>
            <person name="Pitluck S."/>
            <person name="Kiss H."/>
            <person name="Chertkov O."/>
            <person name="Monk C."/>
            <person name="Brettin T."/>
            <person name="Detter J.C."/>
            <person name="Han C."/>
            <person name="Kuske C.R."/>
            <person name="Schmutz J."/>
            <person name="Larimer F."/>
            <person name="Land M."/>
            <person name="Hauser L."/>
            <person name="Kyrpides N."/>
            <person name="Mikhailova N."/>
            <person name="Vishnivetskaya T."/>
            <person name="Rodrigues D.F."/>
            <person name="Gilichinsky D."/>
            <person name="Tiedje J."/>
            <person name="Richardson P."/>
        </authorList>
    </citation>
    <scope>NUCLEOTIDE SEQUENCE [LARGE SCALE GENOMIC DNA]</scope>
    <source>
        <strain>DSM 17290 / CCUG 55495 / CIP 109462 / JCM 13490 / 255-15</strain>
    </source>
</reference>
<comment type="function">
    <text evidence="1">Transmembrane (T) component of an energy-coupling factor (ECF) ABC-transporter complex. Unlike classic ABC transporters this ECF transporter provides the energy necessary to transport a number of different substrates.</text>
</comment>
<comment type="subunit">
    <text evidence="1">Forms a stable energy-coupling factor (ECF) transporter complex composed of 2 membrane-embedded substrate-binding proteins (S component), 2 ATP-binding proteins (A component) and 2 transmembrane proteins (T component). May be able to interact with more than 1 S component at a time (By similarity).</text>
</comment>
<comment type="subcellular location">
    <subcellularLocation>
        <location evidence="1">Cell membrane</location>
        <topology evidence="1">Multi-pass membrane protein</topology>
    </subcellularLocation>
</comment>
<comment type="similarity">
    <text evidence="1">Belongs to the energy-coupling factor EcfT family.</text>
</comment>
<protein>
    <recommendedName>
        <fullName evidence="1">Energy-coupling factor transporter transmembrane protein EcfT</fullName>
        <shortName evidence="1">ECF transporter T component EcfT</shortName>
    </recommendedName>
</protein>
<name>ECFT_EXIS2</name>
<organism>
    <name type="scientific">Exiguobacterium sibiricum (strain DSM 17290 / CCUG 55495 / CIP 109462 / JCM 13490 / 255-15)</name>
    <dbReference type="NCBI Taxonomy" id="262543"/>
    <lineage>
        <taxon>Bacteria</taxon>
        <taxon>Bacillati</taxon>
        <taxon>Bacillota</taxon>
        <taxon>Bacilli</taxon>
        <taxon>Bacillales</taxon>
        <taxon>Bacillales Family XII. Incertae Sedis</taxon>
        <taxon>Exiguobacterium</taxon>
    </lineage>
</organism>
<accession>B1YH82</accession>
<keyword id="KW-1003">Cell membrane</keyword>
<keyword id="KW-0472">Membrane</keyword>
<keyword id="KW-1185">Reference proteome</keyword>
<keyword id="KW-0812">Transmembrane</keyword>
<keyword id="KW-1133">Transmembrane helix</keyword>
<keyword id="KW-0813">Transport</keyword>
<sequence>MIVGQHIPGTSYLHRSSAVAKIIFAFCFIPLVFLANNAATNIFLLLFTFFALASSKLPIRYVLKGLRPILFLIIFTFIIQLLFTREGAVLFEFGWFKIYEEGLRLAIIVSLRFFYLVSITTLVTLTTSPIELTDAIELLLKPFKVVRVPTHEIALMLSISLRFLPTLAEETEKIMKAQQARGVDLSAGPIKERLRAIIPLLIPLFISAFKRAEDLATAMEARGYRGGEGRTRLRESKWTTRDTGLILLLVALGLLLVYLRGGF</sequence>